<gene>
    <name type="primary">HIR1</name>
    <name type="ORF">CIMG_10272</name>
</gene>
<accession>Q1DHE1</accession>
<accession>I9XM51</accession>
<evidence type="ECO:0000250" key="1"/>
<evidence type="ECO:0000256" key="2">
    <source>
        <dbReference type="SAM" id="MobiDB-lite"/>
    </source>
</evidence>
<evidence type="ECO:0000305" key="3"/>
<keyword id="KW-0156">Chromatin regulator</keyword>
<keyword id="KW-0539">Nucleus</keyword>
<keyword id="KW-1185">Reference proteome</keyword>
<keyword id="KW-0677">Repeat</keyword>
<keyword id="KW-0678">Repressor</keyword>
<keyword id="KW-0804">Transcription</keyword>
<keyword id="KW-0805">Transcription regulation</keyword>
<keyword id="KW-0853">WD repeat</keyword>
<name>HIR1_COCIM</name>
<organism>
    <name type="scientific">Coccidioides immitis (strain RS)</name>
    <name type="common">Valley fever fungus</name>
    <dbReference type="NCBI Taxonomy" id="246410"/>
    <lineage>
        <taxon>Eukaryota</taxon>
        <taxon>Fungi</taxon>
        <taxon>Dikarya</taxon>
        <taxon>Ascomycota</taxon>
        <taxon>Pezizomycotina</taxon>
        <taxon>Eurotiomycetes</taxon>
        <taxon>Eurotiomycetidae</taxon>
        <taxon>Onygenales</taxon>
        <taxon>Onygenaceae</taxon>
        <taxon>Coccidioides</taxon>
    </lineage>
</organism>
<protein>
    <recommendedName>
        <fullName>Protein HIR1</fullName>
    </recommendedName>
</protein>
<reference key="1">
    <citation type="journal article" date="2009" name="Genome Res.">
        <title>Comparative genomic analyses of the human fungal pathogens Coccidioides and their relatives.</title>
        <authorList>
            <person name="Sharpton T.J."/>
            <person name="Stajich J.E."/>
            <person name="Rounsley S.D."/>
            <person name="Gardner M.J."/>
            <person name="Wortman J.R."/>
            <person name="Jordar V.S."/>
            <person name="Maiti R."/>
            <person name="Kodira C.D."/>
            <person name="Neafsey D.E."/>
            <person name="Zeng Q."/>
            <person name="Hung C.-Y."/>
            <person name="McMahan C."/>
            <person name="Muszewska A."/>
            <person name="Grynberg M."/>
            <person name="Mandel M.A."/>
            <person name="Kellner E.M."/>
            <person name="Barker B.M."/>
            <person name="Galgiani J.N."/>
            <person name="Orbach M.J."/>
            <person name="Kirkland T.N."/>
            <person name="Cole G.T."/>
            <person name="Henn M.R."/>
            <person name="Birren B.W."/>
            <person name="Taylor J.W."/>
        </authorList>
    </citation>
    <scope>NUCLEOTIDE SEQUENCE [LARGE SCALE GENOMIC DNA]</scope>
    <source>
        <strain>RS</strain>
    </source>
</reference>
<reference key="2">
    <citation type="journal article" date="2010" name="Genome Res.">
        <title>Population genomic sequencing of Coccidioides fungi reveals recent hybridization and transposon control.</title>
        <authorList>
            <person name="Neafsey D.E."/>
            <person name="Barker B.M."/>
            <person name="Sharpton T.J."/>
            <person name="Stajich J.E."/>
            <person name="Park D.J."/>
            <person name="Whiston E."/>
            <person name="Hung C.-Y."/>
            <person name="McMahan C."/>
            <person name="White J."/>
            <person name="Sykes S."/>
            <person name="Heiman D."/>
            <person name="Young S."/>
            <person name="Zeng Q."/>
            <person name="Abouelleil A."/>
            <person name="Aftuck L."/>
            <person name="Bessette D."/>
            <person name="Brown A."/>
            <person name="FitzGerald M."/>
            <person name="Lui A."/>
            <person name="Macdonald J.P."/>
            <person name="Priest M."/>
            <person name="Orbach M.J."/>
            <person name="Galgiani J.N."/>
            <person name="Kirkland T.N."/>
            <person name="Cole G.T."/>
            <person name="Birren B.W."/>
            <person name="Henn M.R."/>
            <person name="Taylor J.W."/>
            <person name="Rounsley S.D."/>
        </authorList>
    </citation>
    <scope>GENOME REANNOTATION</scope>
    <source>
        <strain>RS</strain>
    </source>
</reference>
<feature type="chain" id="PRO_0000286408" description="Protein HIR1">
    <location>
        <begin position="1"/>
        <end position="1061"/>
    </location>
</feature>
<feature type="repeat" description="WD 1">
    <location>
        <begin position="15"/>
        <end position="54"/>
    </location>
</feature>
<feature type="repeat" description="WD 2">
    <location>
        <begin position="69"/>
        <end position="108"/>
    </location>
</feature>
<feature type="repeat" description="WD 3">
    <location>
        <begin position="130"/>
        <end position="169"/>
    </location>
</feature>
<feature type="repeat" description="WD 4">
    <location>
        <begin position="172"/>
        <end position="211"/>
    </location>
</feature>
<feature type="repeat" description="WD 5">
    <location>
        <begin position="233"/>
        <end position="276"/>
    </location>
</feature>
<feature type="repeat" description="WD 6">
    <location>
        <begin position="279"/>
        <end position="340"/>
    </location>
</feature>
<feature type="repeat" description="WD 7">
    <location>
        <begin position="344"/>
        <end position="385"/>
    </location>
</feature>
<feature type="region of interest" description="Disordered" evidence="2">
    <location>
        <begin position="430"/>
        <end position="488"/>
    </location>
</feature>
<feature type="compositionally biased region" description="Low complexity" evidence="2">
    <location>
        <begin position="456"/>
        <end position="468"/>
    </location>
</feature>
<feature type="compositionally biased region" description="Polar residues" evidence="2">
    <location>
        <begin position="469"/>
        <end position="481"/>
    </location>
</feature>
<proteinExistence type="inferred from homology"/>
<sequence length="1061" mass="114509">MHIIKPVWLTHGGDRKDYEVYSCDVSPDGKRLVTAAGDGYVRIWSTDAIYNAADPEYADKPKQLASLSNHSGTIHAVRFSHNGKYLASGADDKIVCVYVHEPNPPSHTSTFGTNEPPPVENWRTIRRLIGHDNDVQDLGWSWDSSILVSVGLDSKVVVWSGHTFEKLKTIPSHQSHVKGITFDPANKYFATASDDRTIRIFRFTSPTPNSTAHDQIQNFVLEHTVKAPFVNSPLTTYFRRCSWSPDGTHIAAANAVNGPVSAAAIINRGSWDSDINLIGHEAPVEVCAFSPRLYSFSPPGKNATDNQGNAGPTLVTVIACAGGDKSLSVWITINPRPIVITQDLSAKAISDLAWSPDGKNLFATALDGTILVVRFEDQELGYPMPMEENEKSLTKFGTSRRGAGIVESANGLLLEEMSKAGEIKGVEGRMGALMGDGHPSTDQGVNGTPGDLSRSGAATAGTATPTGTQKPQQNGTPNGTPGDQEKPDPYAAKLERLKQRPTYTKDGKKRIAPLLVSGAGGTQSSLPQSRLVASSASGLAGRSEGPETVLDLSKPFDGLPKGGIAAILFGNKRKFAQMEDGEDNSVEKRVAAASQHGANPVLINEPDGLVPAAQTARELQETPEFIRPAVVNPVMAVSQIRLAVPKVRVHIVQGIDTFGNPTSVSSGLASSSQSKADLTLEARNHSGPSLTGRVTDREPSRVSLTRGDQPLWQDFLPKAVLLVTGNKKFWAAATEDGSVYIWTPAGRRLVSALVLEAQPVLLECRESWLLCITAVGMCYVWNVTTLTSPHPPISLAPVLDAAVHTMTQTPTTVPSIIAARISSQGRIILAVSNGDGYSYNPSLYTWQRLSEPWFAVASQYWNTTDSSVGDLQLARNQTGPDAAISAGIIPFLERNTTDEIVVRGRAYFLQRLIKVLLSKEGFESFEAGASIAHLENRVAAALSLGAKEEFRLYLLMYAKRLGAEGLKMKTEELLEGLIGGIFSEGEEKENSVTGDKGKNSEEGLWECESDTICGWPRRDLLKEVVLALGKHRDLQRITVPYAHLLGILDEDKNEADAMVIT</sequence>
<dbReference type="EMBL" id="GG704915">
    <property type="protein sequence ID" value="EAS27667.3"/>
    <property type="molecule type" value="Genomic_DNA"/>
</dbReference>
<dbReference type="RefSeq" id="XP_001239250.1">
    <property type="nucleotide sequence ID" value="XM_001239249.2"/>
</dbReference>
<dbReference type="SMR" id="Q1DHE1"/>
<dbReference type="FunCoup" id="Q1DHE1">
    <property type="interactions" value="161"/>
</dbReference>
<dbReference type="STRING" id="246410.Q1DHE1"/>
<dbReference type="GeneID" id="4557941"/>
<dbReference type="KEGG" id="cim:CIMG_10272"/>
<dbReference type="VEuPathDB" id="FungiDB:CIMG_10272"/>
<dbReference type="InParanoid" id="Q1DHE1"/>
<dbReference type="OMA" id="RGSWDGD"/>
<dbReference type="OrthoDB" id="1741719at2759"/>
<dbReference type="Proteomes" id="UP000001261">
    <property type="component" value="Unassembled WGS sequence"/>
</dbReference>
<dbReference type="GO" id="GO:0000785">
    <property type="term" value="C:chromatin"/>
    <property type="evidence" value="ECO:0007669"/>
    <property type="project" value="TreeGrafter"/>
</dbReference>
<dbReference type="GO" id="GO:0000417">
    <property type="term" value="C:HIR complex"/>
    <property type="evidence" value="ECO:0007669"/>
    <property type="project" value="TreeGrafter"/>
</dbReference>
<dbReference type="GO" id="GO:0005634">
    <property type="term" value="C:nucleus"/>
    <property type="evidence" value="ECO:0007669"/>
    <property type="project" value="UniProtKB-SubCell"/>
</dbReference>
<dbReference type="GO" id="GO:0031491">
    <property type="term" value="F:nucleosome binding"/>
    <property type="evidence" value="ECO:0007669"/>
    <property type="project" value="TreeGrafter"/>
</dbReference>
<dbReference type="GO" id="GO:0006338">
    <property type="term" value="P:chromatin remodeling"/>
    <property type="evidence" value="ECO:0007669"/>
    <property type="project" value="InterPro"/>
</dbReference>
<dbReference type="GO" id="GO:0006351">
    <property type="term" value="P:DNA-templated transcription"/>
    <property type="evidence" value="ECO:0007669"/>
    <property type="project" value="InterPro"/>
</dbReference>
<dbReference type="GO" id="GO:0006355">
    <property type="term" value="P:regulation of DNA-templated transcription"/>
    <property type="evidence" value="ECO:0007669"/>
    <property type="project" value="InterPro"/>
</dbReference>
<dbReference type="CDD" id="cd00200">
    <property type="entry name" value="WD40"/>
    <property type="match status" value="1"/>
</dbReference>
<dbReference type="FunFam" id="2.130.10.10:FF:000290">
    <property type="entry name" value="Protein HIR"/>
    <property type="match status" value="1"/>
</dbReference>
<dbReference type="FunFam" id="2.130.10.10:FF:001557">
    <property type="entry name" value="Protein HIR"/>
    <property type="match status" value="1"/>
</dbReference>
<dbReference type="Gene3D" id="2.130.10.10">
    <property type="entry name" value="YVTN repeat-like/Quinoprotein amine dehydrogenase"/>
    <property type="match status" value="2"/>
</dbReference>
<dbReference type="InterPro" id="IPR055410">
    <property type="entry name" value="CAF1B_HIR1_beta-prop"/>
</dbReference>
<dbReference type="InterPro" id="IPR031120">
    <property type="entry name" value="HIR1-like"/>
</dbReference>
<dbReference type="InterPro" id="IPR011494">
    <property type="entry name" value="HIRA-like_C"/>
</dbReference>
<dbReference type="InterPro" id="IPR019015">
    <property type="entry name" value="HIRA_B_motif"/>
</dbReference>
<dbReference type="InterPro" id="IPR011045">
    <property type="entry name" value="N2O_reductase_N"/>
</dbReference>
<dbReference type="InterPro" id="IPR015943">
    <property type="entry name" value="WD40/YVTN_repeat-like_dom_sf"/>
</dbReference>
<dbReference type="InterPro" id="IPR036322">
    <property type="entry name" value="WD40_repeat_dom_sf"/>
</dbReference>
<dbReference type="InterPro" id="IPR001680">
    <property type="entry name" value="WD40_rpt"/>
</dbReference>
<dbReference type="PANTHER" id="PTHR13831">
    <property type="entry name" value="MEMBER OF THE HIR1 FAMILY OF WD-REPEAT PROTEINS"/>
    <property type="match status" value="1"/>
</dbReference>
<dbReference type="PANTHER" id="PTHR13831:SF0">
    <property type="entry name" value="PROTEIN HIRA"/>
    <property type="match status" value="1"/>
</dbReference>
<dbReference type="Pfam" id="PF24105">
    <property type="entry name" value="Beta-prop_CAF1B_HIR1"/>
    <property type="match status" value="1"/>
</dbReference>
<dbReference type="Pfam" id="PF07569">
    <property type="entry name" value="Hira"/>
    <property type="match status" value="1"/>
</dbReference>
<dbReference type="Pfam" id="PF09453">
    <property type="entry name" value="HIRA_B"/>
    <property type="match status" value="1"/>
</dbReference>
<dbReference type="SMART" id="SM00320">
    <property type="entry name" value="WD40"/>
    <property type="match status" value="6"/>
</dbReference>
<dbReference type="SUPFAM" id="SSF50974">
    <property type="entry name" value="Nitrous oxide reductase, N-terminal domain"/>
    <property type="match status" value="1"/>
</dbReference>
<dbReference type="SUPFAM" id="SSF50978">
    <property type="entry name" value="WD40 repeat-like"/>
    <property type="match status" value="1"/>
</dbReference>
<dbReference type="PROSITE" id="PS50082">
    <property type="entry name" value="WD_REPEATS_2"/>
    <property type="match status" value="4"/>
</dbReference>
<dbReference type="PROSITE" id="PS50294">
    <property type="entry name" value="WD_REPEATS_REGION"/>
    <property type="match status" value="1"/>
</dbReference>
<comment type="function">
    <text evidence="1">Required for replication-independent chromatin assembly and for the periodic repression of histone gene transcription during the cell cycle.</text>
</comment>
<comment type="subcellular location">
    <subcellularLocation>
        <location evidence="1">Nucleus</location>
    </subcellularLocation>
</comment>
<comment type="similarity">
    <text evidence="3">Belongs to the WD repeat HIR1 family.</text>
</comment>